<accession>Q7NMN8</accession>
<name>DNLJ_GLOVI</name>
<organism>
    <name type="scientific">Gloeobacter violaceus (strain ATCC 29082 / PCC 7421)</name>
    <dbReference type="NCBI Taxonomy" id="251221"/>
    <lineage>
        <taxon>Bacteria</taxon>
        <taxon>Bacillati</taxon>
        <taxon>Cyanobacteriota</taxon>
        <taxon>Cyanophyceae</taxon>
        <taxon>Gloeobacterales</taxon>
        <taxon>Gloeobacteraceae</taxon>
        <taxon>Gloeobacter</taxon>
    </lineage>
</organism>
<feature type="chain" id="PRO_0000313251" description="DNA ligase">
    <location>
        <begin position="1"/>
        <end position="668"/>
    </location>
</feature>
<feature type="domain" description="BRCT" evidence="1">
    <location>
        <begin position="586"/>
        <end position="668"/>
    </location>
</feature>
<feature type="active site" description="N6-AMP-lysine intermediate" evidence="1">
    <location>
        <position position="118"/>
    </location>
</feature>
<feature type="binding site" evidence="1">
    <location>
        <begin position="37"/>
        <end position="41"/>
    </location>
    <ligand>
        <name>NAD(+)</name>
        <dbReference type="ChEBI" id="CHEBI:57540"/>
    </ligand>
</feature>
<feature type="binding site" evidence="1">
    <location>
        <begin position="86"/>
        <end position="87"/>
    </location>
    <ligand>
        <name>NAD(+)</name>
        <dbReference type="ChEBI" id="CHEBI:57540"/>
    </ligand>
</feature>
<feature type="binding site" evidence="1">
    <location>
        <position position="116"/>
    </location>
    <ligand>
        <name>NAD(+)</name>
        <dbReference type="ChEBI" id="CHEBI:57540"/>
    </ligand>
</feature>
<feature type="binding site" evidence="1">
    <location>
        <position position="139"/>
    </location>
    <ligand>
        <name>NAD(+)</name>
        <dbReference type="ChEBI" id="CHEBI:57540"/>
    </ligand>
</feature>
<feature type="binding site" evidence="1">
    <location>
        <position position="176"/>
    </location>
    <ligand>
        <name>NAD(+)</name>
        <dbReference type="ChEBI" id="CHEBI:57540"/>
    </ligand>
</feature>
<feature type="binding site" evidence="1">
    <location>
        <position position="289"/>
    </location>
    <ligand>
        <name>NAD(+)</name>
        <dbReference type="ChEBI" id="CHEBI:57540"/>
    </ligand>
</feature>
<feature type="binding site" evidence="1">
    <location>
        <position position="313"/>
    </location>
    <ligand>
        <name>NAD(+)</name>
        <dbReference type="ChEBI" id="CHEBI:57540"/>
    </ligand>
</feature>
<feature type="binding site" evidence="1">
    <location>
        <position position="407"/>
    </location>
    <ligand>
        <name>Zn(2+)</name>
        <dbReference type="ChEBI" id="CHEBI:29105"/>
    </ligand>
</feature>
<feature type="binding site" evidence="1">
    <location>
        <position position="410"/>
    </location>
    <ligand>
        <name>Zn(2+)</name>
        <dbReference type="ChEBI" id="CHEBI:29105"/>
    </ligand>
</feature>
<feature type="binding site" evidence="1">
    <location>
        <position position="425"/>
    </location>
    <ligand>
        <name>Zn(2+)</name>
        <dbReference type="ChEBI" id="CHEBI:29105"/>
    </ligand>
</feature>
<feature type="binding site" evidence="1">
    <location>
        <position position="430"/>
    </location>
    <ligand>
        <name>Zn(2+)</name>
        <dbReference type="ChEBI" id="CHEBI:29105"/>
    </ligand>
</feature>
<evidence type="ECO:0000255" key="1">
    <source>
        <dbReference type="HAMAP-Rule" id="MF_01588"/>
    </source>
</evidence>
<reference key="1">
    <citation type="journal article" date="2003" name="DNA Res.">
        <title>Complete genome structure of Gloeobacter violaceus PCC 7421, a cyanobacterium that lacks thylakoids.</title>
        <authorList>
            <person name="Nakamura Y."/>
            <person name="Kaneko T."/>
            <person name="Sato S."/>
            <person name="Mimuro M."/>
            <person name="Miyashita H."/>
            <person name="Tsuchiya T."/>
            <person name="Sasamoto S."/>
            <person name="Watanabe A."/>
            <person name="Kawashima K."/>
            <person name="Kishida Y."/>
            <person name="Kiyokawa C."/>
            <person name="Kohara M."/>
            <person name="Matsumoto M."/>
            <person name="Matsuno A."/>
            <person name="Nakazaki N."/>
            <person name="Shimpo S."/>
            <person name="Takeuchi C."/>
            <person name="Yamada M."/>
            <person name="Tabata S."/>
        </authorList>
    </citation>
    <scope>NUCLEOTIDE SEQUENCE [LARGE SCALE GENOMIC DNA]</scope>
    <source>
        <strain>ATCC 29082 / PCC 7421</strain>
    </source>
</reference>
<dbReference type="EC" id="6.5.1.2" evidence="1"/>
<dbReference type="EMBL" id="BA000045">
    <property type="protein sequence ID" value="BAC88668.1"/>
    <property type="molecule type" value="Genomic_DNA"/>
</dbReference>
<dbReference type="RefSeq" id="NP_923673.1">
    <property type="nucleotide sequence ID" value="NC_005125.1"/>
</dbReference>
<dbReference type="RefSeq" id="WP_011140729.1">
    <property type="nucleotide sequence ID" value="NC_005125.1"/>
</dbReference>
<dbReference type="SMR" id="Q7NMN8"/>
<dbReference type="FunCoup" id="Q7NMN8">
    <property type="interactions" value="55"/>
</dbReference>
<dbReference type="STRING" id="251221.gene:10758203"/>
<dbReference type="EnsemblBacteria" id="BAC88668">
    <property type="protein sequence ID" value="BAC88668"/>
    <property type="gene ID" value="BAC88668"/>
</dbReference>
<dbReference type="KEGG" id="gvi:glr0727"/>
<dbReference type="PATRIC" id="fig|251221.4.peg.740"/>
<dbReference type="eggNOG" id="COG0272">
    <property type="taxonomic scope" value="Bacteria"/>
</dbReference>
<dbReference type="HOGENOM" id="CLU_007764_2_1_3"/>
<dbReference type="InParanoid" id="Q7NMN8"/>
<dbReference type="OrthoDB" id="9759736at2"/>
<dbReference type="PhylomeDB" id="Q7NMN8"/>
<dbReference type="Proteomes" id="UP000000557">
    <property type="component" value="Chromosome"/>
</dbReference>
<dbReference type="GO" id="GO:0005829">
    <property type="term" value="C:cytosol"/>
    <property type="evidence" value="ECO:0000318"/>
    <property type="project" value="GO_Central"/>
</dbReference>
<dbReference type="GO" id="GO:0003677">
    <property type="term" value="F:DNA binding"/>
    <property type="evidence" value="ECO:0007669"/>
    <property type="project" value="InterPro"/>
</dbReference>
<dbReference type="GO" id="GO:0003911">
    <property type="term" value="F:DNA ligase (NAD+) activity"/>
    <property type="evidence" value="ECO:0000318"/>
    <property type="project" value="GO_Central"/>
</dbReference>
<dbReference type="GO" id="GO:0046872">
    <property type="term" value="F:metal ion binding"/>
    <property type="evidence" value="ECO:0007669"/>
    <property type="project" value="UniProtKB-KW"/>
</dbReference>
<dbReference type="GO" id="GO:0006281">
    <property type="term" value="P:DNA repair"/>
    <property type="evidence" value="ECO:0007669"/>
    <property type="project" value="UniProtKB-KW"/>
</dbReference>
<dbReference type="GO" id="GO:0006260">
    <property type="term" value="P:DNA replication"/>
    <property type="evidence" value="ECO:0007669"/>
    <property type="project" value="UniProtKB-KW"/>
</dbReference>
<dbReference type="CDD" id="cd00114">
    <property type="entry name" value="LIGANc"/>
    <property type="match status" value="1"/>
</dbReference>
<dbReference type="FunFam" id="1.10.150.20:FF:000006">
    <property type="entry name" value="DNA ligase"/>
    <property type="match status" value="1"/>
</dbReference>
<dbReference type="FunFam" id="1.10.287.610:FF:000002">
    <property type="entry name" value="DNA ligase"/>
    <property type="match status" value="1"/>
</dbReference>
<dbReference type="FunFam" id="2.40.50.140:FF:000012">
    <property type="entry name" value="DNA ligase"/>
    <property type="match status" value="1"/>
</dbReference>
<dbReference type="FunFam" id="3.30.470.30:FF:000001">
    <property type="entry name" value="DNA ligase"/>
    <property type="match status" value="1"/>
</dbReference>
<dbReference type="Gene3D" id="6.20.10.30">
    <property type="match status" value="1"/>
</dbReference>
<dbReference type="Gene3D" id="1.10.150.20">
    <property type="entry name" value="5' to 3' exonuclease, C-terminal subdomain"/>
    <property type="match status" value="2"/>
</dbReference>
<dbReference type="Gene3D" id="3.40.50.10190">
    <property type="entry name" value="BRCT domain"/>
    <property type="match status" value="1"/>
</dbReference>
<dbReference type="Gene3D" id="3.30.470.30">
    <property type="entry name" value="DNA ligase/mRNA capping enzyme"/>
    <property type="match status" value="1"/>
</dbReference>
<dbReference type="Gene3D" id="1.10.287.610">
    <property type="entry name" value="Helix hairpin bin"/>
    <property type="match status" value="1"/>
</dbReference>
<dbReference type="Gene3D" id="2.40.50.140">
    <property type="entry name" value="Nucleic acid-binding proteins"/>
    <property type="match status" value="1"/>
</dbReference>
<dbReference type="HAMAP" id="MF_01588">
    <property type="entry name" value="DNA_ligase_A"/>
    <property type="match status" value="1"/>
</dbReference>
<dbReference type="InterPro" id="IPR001357">
    <property type="entry name" value="BRCT_dom"/>
</dbReference>
<dbReference type="InterPro" id="IPR036420">
    <property type="entry name" value="BRCT_dom_sf"/>
</dbReference>
<dbReference type="InterPro" id="IPR041663">
    <property type="entry name" value="DisA/LigA_HHH"/>
</dbReference>
<dbReference type="InterPro" id="IPR001679">
    <property type="entry name" value="DNA_ligase"/>
</dbReference>
<dbReference type="InterPro" id="IPR018239">
    <property type="entry name" value="DNA_ligase_AS"/>
</dbReference>
<dbReference type="InterPro" id="IPR033136">
    <property type="entry name" value="DNA_ligase_CS"/>
</dbReference>
<dbReference type="InterPro" id="IPR013839">
    <property type="entry name" value="DNAligase_adenylation"/>
</dbReference>
<dbReference type="InterPro" id="IPR013840">
    <property type="entry name" value="DNAligase_N"/>
</dbReference>
<dbReference type="InterPro" id="IPR003583">
    <property type="entry name" value="Hlx-hairpin-Hlx_DNA-bd_motif"/>
</dbReference>
<dbReference type="InterPro" id="IPR012340">
    <property type="entry name" value="NA-bd_OB-fold"/>
</dbReference>
<dbReference type="InterPro" id="IPR004150">
    <property type="entry name" value="NAD_DNA_ligase_OB"/>
</dbReference>
<dbReference type="InterPro" id="IPR010994">
    <property type="entry name" value="RuvA_2-like"/>
</dbReference>
<dbReference type="InterPro" id="IPR004149">
    <property type="entry name" value="Znf_DNAligase_C4"/>
</dbReference>
<dbReference type="NCBIfam" id="TIGR00575">
    <property type="entry name" value="dnlj"/>
    <property type="match status" value="1"/>
</dbReference>
<dbReference type="NCBIfam" id="NF005932">
    <property type="entry name" value="PRK07956.1"/>
    <property type="match status" value="1"/>
</dbReference>
<dbReference type="PANTHER" id="PTHR23389">
    <property type="entry name" value="CHROMOSOME TRANSMISSION FIDELITY FACTOR 18"/>
    <property type="match status" value="1"/>
</dbReference>
<dbReference type="PANTHER" id="PTHR23389:SF9">
    <property type="entry name" value="DNA LIGASE"/>
    <property type="match status" value="1"/>
</dbReference>
<dbReference type="Pfam" id="PF00533">
    <property type="entry name" value="BRCT"/>
    <property type="match status" value="1"/>
</dbReference>
<dbReference type="Pfam" id="PF01653">
    <property type="entry name" value="DNA_ligase_aden"/>
    <property type="match status" value="1"/>
</dbReference>
<dbReference type="Pfam" id="PF03120">
    <property type="entry name" value="DNA_ligase_OB"/>
    <property type="match status" value="1"/>
</dbReference>
<dbReference type="Pfam" id="PF03119">
    <property type="entry name" value="DNA_ligase_ZBD"/>
    <property type="match status" value="1"/>
</dbReference>
<dbReference type="Pfam" id="PF12826">
    <property type="entry name" value="HHH_2"/>
    <property type="match status" value="1"/>
</dbReference>
<dbReference type="Pfam" id="PF14520">
    <property type="entry name" value="HHH_5"/>
    <property type="match status" value="1"/>
</dbReference>
<dbReference type="Pfam" id="PF22745">
    <property type="entry name" value="Nlig-Ia"/>
    <property type="match status" value="1"/>
</dbReference>
<dbReference type="PIRSF" id="PIRSF001604">
    <property type="entry name" value="LigA"/>
    <property type="match status" value="1"/>
</dbReference>
<dbReference type="SMART" id="SM00292">
    <property type="entry name" value="BRCT"/>
    <property type="match status" value="1"/>
</dbReference>
<dbReference type="SMART" id="SM00278">
    <property type="entry name" value="HhH1"/>
    <property type="match status" value="3"/>
</dbReference>
<dbReference type="SMART" id="SM00532">
    <property type="entry name" value="LIGANc"/>
    <property type="match status" value="1"/>
</dbReference>
<dbReference type="SUPFAM" id="SSF52113">
    <property type="entry name" value="BRCT domain"/>
    <property type="match status" value="1"/>
</dbReference>
<dbReference type="SUPFAM" id="SSF56091">
    <property type="entry name" value="DNA ligase/mRNA capping enzyme, catalytic domain"/>
    <property type="match status" value="1"/>
</dbReference>
<dbReference type="SUPFAM" id="SSF50249">
    <property type="entry name" value="Nucleic acid-binding proteins"/>
    <property type="match status" value="1"/>
</dbReference>
<dbReference type="SUPFAM" id="SSF47781">
    <property type="entry name" value="RuvA domain 2-like"/>
    <property type="match status" value="1"/>
</dbReference>
<dbReference type="PROSITE" id="PS50172">
    <property type="entry name" value="BRCT"/>
    <property type="match status" value="1"/>
</dbReference>
<dbReference type="PROSITE" id="PS01055">
    <property type="entry name" value="DNA_LIGASE_N1"/>
    <property type="match status" value="1"/>
</dbReference>
<dbReference type="PROSITE" id="PS01056">
    <property type="entry name" value="DNA_LIGASE_N2"/>
    <property type="match status" value="1"/>
</dbReference>
<comment type="function">
    <text evidence="1">DNA ligase that catalyzes the formation of phosphodiester linkages between 5'-phosphoryl and 3'-hydroxyl groups in double-stranded DNA using NAD as a coenzyme and as the energy source for the reaction. It is essential for DNA replication and repair of damaged DNA.</text>
</comment>
<comment type="catalytic activity">
    <reaction evidence="1">
        <text>NAD(+) + (deoxyribonucleotide)n-3'-hydroxyl + 5'-phospho-(deoxyribonucleotide)m = (deoxyribonucleotide)n+m + AMP + beta-nicotinamide D-nucleotide.</text>
        <dbReference type="EC" id="6.5.1.2"/>
    </reaction>
</comment>
<comment type="cofactor">
    <cofactor evidence="1">
        <name>Mg(2+)</name>
        <dbReference type="ChEBI" id="CHEBI:18420"/>
    </cofactor>
    <cofactor evidence="1">
        <name>Mn(2+)</name>
        <dbReference type="ChEBI" id="CHEBI:29035"/>
    </cofactor>
</comment>
<comment type="similarity">
    <text evidence="1">Belongs to the NAD-dependent DNA ligase family. LigA subfamily.</text>
</comment>
<proteinExistence type="inferred from homology"/>
<protein>
    <recommendedName>
        <fullName evidence="1">DNA ligase</fullName>
        <ecNumber evidence="1">6.5.1.2</ecNumber>
    </recommendedName>
    <alternativeName>
        <fullName evidence="1">Polydeoxyribonucleotide synthase [NAD(+)]</fullName>
    </alternativeName>
</protein>
<gene>
    <name evidence="1" type="primary">ligA</name>
    <name type="ordered locus">glr0727</name>
</gene>
<keyword id="KW-0227">DNA damage</keyword>
<keyword id="KW-0234">DNA repair</keyword>
<keyword id="KW-0235">DNA replication</keyword>
<keyword id="KW-0436">Ligase</keyword>
<keyword id="KW-0460">Magnesium</keyword>
<keyword id="KW-0464">Manganese</keyword>
<keyword id="KW-0479">Metal-binding</keyword>
<keyword id="KW-0520">NAD</keyword>
<keyword id="KW-1185">Reference proteome</keyword>
<keyword id="KW-0862">Zinc</keyword>
<sequence>MSTTVPPEIEEHTRTLRALLHRWGYAYYVLDAPEVSDAIYDQHYRELVDLESRYPELVSPDSPTRRVGERPASAFVSVTHRVPMFSLENAFSQAELEKWGERLLRAIGPGLEFICELKIDGSATALSYEDGVLVRGATRGDGVEGEEITQNLRTIRAIPLKLLGGEVPAVLEVRGEAFIPRDEFERINQERQAAGEKLFANPRNACAGTLRQLDSRVVASRRLGFFAYTAHYGRAESQWEALAELESHGFRVNPHRSLCRDLAEVRTFCEHWENHRHELPYDTDGVVVKVNAFDHQREVGFTSKFPRWAIAFKYPAEEKSTVVEAIAVQVGRTGALTPVAELQPVAVAGTTVSRATLHNQDRIESLDVRVGDTVIIRKAGEIIPEVVRVIGELRPPEAVPYVFPQTCPECGTAVVRAPGEAAVRCPNPRCPALIRGKLGHWCAALEIDGIGDKLIARLVSLGLVHTVADLYELSAEQLAGLERLGARSAAKIVEQLDRSHRQPWSRVLYGLGLRHIGASVSVELARAFASADALARADLAAIASLYGFGEELARSVVEWFAQAENRALLERLKAHGLQLAGGGRAAQSSALAGLTFVITGTLPTLSREECTALIESHGGKVTSSVSSRTSYVVAGEKAGSKLARAQDLKVAVLDEEQLRALIETREMP</sequence>